<keyword id="KW-0687">Ribonucleoprotein</keyword>
<keyword id="KW-0689">Ribosomal protein</keyword>
<name>RL36_ROSS1</name>
<protein>
    <recommendedName>
        <fullName evidence="1">Large ribosomal subunit protein bL36</fullName>
    </recommendedName>
    <alternativeName>
        <fullName evidence="2">50S ribosomal protein L36</fullName>
    </alternativeName>
</protein>
<evidence type="ECO:0000255" key="1">
    <source>
        <dbReference type="HAMAP-Rule" id="MF_00251"/>
    </source>
</evidence>
<evidence type="ECO:0000305" key="2"/>
<dbReference type="EMBL" id="CP000686">
    <property type="protein sequence ID" value="ABQ89569.1"/>
    <property type="molecule type" value="Genomic_DNA"/>
</dbReference>
<dbReference type="SMR" id="A5USG6"/>
<dbReference type="STRING" id="357808.RoseRS_1162"/>
<dbReference type="KEGG" id="rrs:RoseRS_1162"/>
<dbReference type="eggNOG" id="COG0257">
    <property type="taxonomic scope" value="Bacteria"/>
</dbReference>
<dbReference type="HOGENOM" id="CLU_135723_6_2_0"/>
<dbReference type="OrthoDB" id="9802520at2"/>
<dbReference type="Proteomes" id="UP000006554">
    <property type="component" value="Chromosome"/>
</dbReference>
<dbReference type="GO" id="GO:0005737">
    <property type="term" value="C:cytoplasm"/>
    <property type="evidence" value="ECO:0007669"/>
    <property type="project" value="UniProtKB-ARBA"/>
</dbReference>
<dbReference type="GO" id="GO:1990904">
    <property type="term" value="C:ribonucleoprotein complex"/>
    <property type="evidence" value="ECO:0007669"/>
    <property type="project" value="UniProtKB-KW"/>
</dbReference>
<dbReference type="GO" id="GO:0005840">
    <property type="term" value="C:ribosome"/>
    <property type="evidence" value="ECO:0007669"/>
    <property type="project" value="UniProtKB-KW"/>
</dbReference>
<dbReference type="GO" id="GO:0003735">
    <property type="term" value="F:structural constituent of ribosome"/>
    <property type="evidence" value="ECO:0007669"/>
    <property type="project" value="InterPro"/>
</dbReference>
<dbReference type="GO" id="GO:0006412">
    <property type="term" value="P:translation"/>
    <property type="evidence" value="ECO:0007669"/>
    <property type="project" value="UniProtKB-UniRule"/>
</dbReference>
<dbReference type="HAMAP" id="MF_00251">
    <property type="entry name" value="Ribosomal_bL36"/>
    <property type="match status" value="1"/>
</dbReference>
<dbReference type="InterPro" id="IPR000473">
    <property type="entry name" value="Ribosomal_bL36"/>
</dbReference>
<dbReference type="InterPro" id="IPR035977">
    <property type="entry name" value="Ribosomal_bL36_sp"/>
</dbReference>
<dbReference type="NCBIfam" id="TIGR01022">
    <property type="entry name" value="rpmJ_bact"/>
    <property type="match status" value="1"/>
</dbReference>
<dbReference type="PANTHER" id="PTHR42888">
    <property type="entry name" value="50S RIBOSOMAL PROTEIN L36, CHLOROPLASTIC"/>
    <property type="match status" value="1"/>
</dbReference>
<dbReference type="PANTHER" id="PTHR42888:SF1">
    <property type="entry name" value="LARGE RIBOSOMAL SUBUNIT PROTEIN BL36C"/>
    <property type="match status" value="1"/>
</dbReference>
<dbReference type="Pfam" id="PF00444">
    <property type="entry name" value="Ribosomal_L36"/>
    <property type="match status" value="1"/>
</dbReference>
<dbReference type="SUPFAM" id="SSF57840">
    <property type="entry name" value="Ribosomal protein L36"/>
    <property type="match status" value="1"/>
</dbReference>
<dbReference type="PROSITE" id="PS00828">
    <property type="entry name" value="RIBOSOMAL_L36"/>
    <property type="match status" value="1"/>
</dbReference>
<accession>A5USG6</accession>
<sequence length="38" mass="4524">MKVRASVKPRCEYCRVIKRKGVLRVICSRQPKHKQRQG</sequence>
<gene>
    <name evidence="1" type="primary">rpmJ</name>
    <name type="ordered locus">RoseRS_1162</name>
</gene>
<comment type="similarity">
    <text evidence="1">Belongs to the bacterial ribosomal protein bL36 family.</text>
</comment>
<organism>
    <name type="scientific">Roseiflexus sp. (strain RS-1)</name>
    <dbReference type="NCBI Taxonomy" id="357808"/>
    <lineage>
        <taxon>Bacteria</taxon>
        <taxon>Bacillati</taxon>
        <taxon>Chloroflexota</taxon>
        <taxon>Chloroflexia</taxon>
        <taxon>Chloroflexales</taxon>
        <taxon>Roseiflexineae</taxon>
        <taxon>Roseiflexaceae</taxon>
        <taxon>Roseiflexus</taxon>
    </lineage>
</organism>
<proteinExistence type="inferred from homology"/>
<reference key="1">
    <citation type="submission" date="2007-04" db="EMBL/GenBank/DDBJ databases">
        <title>Complete sequence of Roseiflexus sp. RS-1.</title>
        <authorList>
            <consortium name="US DOE Joint Genome Institute"/>
            <person name="Copeland A."/>
            <person name="Lucas S."/>
            <person name="Lapidus A."/>
            <person name="Barry K."/>
            <person name="Detter J.C."/>
            <person name="Glavina del Rio T."/>
            <person name="Hammon N."/>
            <person name="Israni S."/>
            <person name="Dalin E."/>
            <person name="Tice H."/>
            <person name="Pitluck S."/>
            <person name="Chertkov O."/>
            <person name="Brettin T."/>
            <person name="Bruce D."/>
            <person name="Han C."/>
            <person name="Schmutz J."/>
            <person name="Larimer F."/>
            <person name="Land M."/>
            <person name="Hauser L."/>
            <person name="Kyrpides N."/>
            <person name="Mikhailova N."/>
            <person name="Bryant D.A."/>
            <person name="Richardson P."/>
        </authorList>
    </citation>
    <scope>NUCLEOTIDE SEQUENCE [LARGE SCALE GENOMIC DNA]</scope>
    <source>
        <strain>RS-1</strain>
    </source>
</reference>
<feature type="chain" id="PRO_1000003413" description="Large ribosomal subunit protein bL36">
    <location>
        <begin position="1"/>
        <end position="38"/>
    </location>
</feature>